<sequence length="274" mass="30252">MQFSKMHGLGNDFMVVDAVTQNVYFSPELIRRLADRHTGVGFDQMLVVEPPYDPELDFHYRIFNADGSEVSQCGNGARCFARFVRLKGLTNKREISVSTQTGRMILSVTEDEQVCVNMGEPDFEPQTVPFRAAKAEKTYILRAAEHTVLCGVVSMGNPHCVMQVDDVSVANVALLGPVLENHERFPERANIGFMQVVSRDHIRLRVYERGAGETQACGSGACAAVAVGVVQDLLNENVHVELPGGSLHIRWQGPGHPLYMTGPATHVYDGFIHL</sequence>
<proteinExistence type="inferred from homology"/>
<protein>
    <recommendedName>
        <fullName evidence="1">Diaminopimelate epimerase</fullName>
        <shortName evidence="1">DAP epimerase</shortName>
        <ecNumber evidence="1">5.1.1.7</ecNumber>
    </recommendedName>
    <alternativeName>
        <fullName evidence="1">PLP-independent amino acid racemase</fullName>
    </alternativeName>
</protein>
<dbReference type="EC" id="5.1.1.7" evidence="1"/>
<dbReference type="EMBL" id="CP000720">
    <property type="protein sequence ID" value="ABS48556.1"/>
    <property type="molecule type" value="Genomic_DNA"/>
</dbReference>
<dbReference type="RefSeq" id="WP_002211471.1">
    <property type="nucleotide sequence ID" value="NC_009708.1"/>
</dbReference>
<dbReference type="SMR" id="A7FD74"/>
<dbReference type="GeneID" id="57974864"/>
<dbReference type="KEGG" id="ypi:YpsIP31758_0205"/>
<dbReference type="HOGENOM" id="CLU_053306_1_1_6"/>
<dbReference type="UniPathway" id="UPA00034">
    <property type="reaction ID" value="UER00025"/>
</dbReference>
<dbReference type="Proteomes" id="UP000002412">
    <property type="component" value="Chromosome"/>
</dbReference>
<dbReference type="GO" id="GO:0005829">
    <property type="term" value="C:cytosol"/>
    <property type="evidence" value="ECO:0007669"/>
    <property type="project" value="TreeGrafter"/>
</dbReference>
<dbReference type="GO" id="GO:0008837">
    <property type="term" value="F:diaminopimelate epimerase activity"/>
    <property type="evidence" value="ECO:0007669"/>
    <property type="project" value="UniProtKB-UniRule"/>
</dbReference>
<dbReference type="GO" id="GO:0009089">
    <property type="term" value="P:lysine biosynthetic process via diaminopimelate"/>
    <property type="evidence" value="ECO:0007669"/>
    <property type="project" value="UniProtKB-UniRule"/>
</dbReference>
<dbReference type="FunFam" id="3.10.310.10:FF:000001">
    <property type="entry name" value="Diaminopimelate epimerase"/>
    <property type="match status" value="1"/>
</dbReference>
<dbReference type="FunFam" id="3.10.310.10:FF:000002">
    <property type="entry name" value="Diaminopimelate epimerase"/>
    <property type="match status" value="1"/>
</dbReference>
<dbReference type="Gene3D" id="3.10.310.10">
    <property type="entry name" value="Diaminopimelate Epimerase, Chain A, domain 1"/>
    <property type="match status" value="2"/>
</dbReference>
<dbReference type="HAMAP" id="MF_00197">
    <property type="entry name" value="DAP_epimerase"/>
    <property type="match status" value="1"/>
</dbReference>
<dbReference type="InterPro" id="IPR018510">
    <property type="entry name" value="DAP_epimerase_AS"/>
</dbReference>
<dbReference type="InterPro" id="IPR001653">
    <property type="entry name" value="DAP_epimerase_DapF"/>
</dbReference>
<dbReference type="NCBIfam" id="TIGR00652">
    <property type="entry name" value="DapF"/>
    <property type="match status" value="1"/>
</dbReference>
<dbReference type="PANTHER" id="PTHR31689:SF0">
    <property type="entry name" value="DIAMINOPIMELATE EPIMERASE"/>
    <property type="match status" value="1"/>
</dbReference>
<dbReference type="PANTHER" id="PTHR31689">
    <property type="entry name" value="DIAMINOPIMELATE EPIMERASE, CHLOROPLASTIC"/>
    <property type="match status" value="1"/>
</dbReference>
<dbReference type="Pfam" id="PF01678">
    <property type="entry name" value="DAP_epimerase"/>
    <property type="match status" value="2"/>
</dbReference>
<dbReference type="SUPFAM" id="SSF54506">
    <property type="entry name" value="Diaminopimelate epimerase-like"/>
    <property type="match status" value="1"/>
</dbReference>
<dbReference type="PROSITE" id="PS01326">
    <property type="entry name" value="DAP_EPIMERASE"/>
    <property type="match status" value="1"/>
</dbReference>
<accession>A7FD74</accession>
<name>DAPF_YERP3</name>
<evidence type="ECO:0000255" key="1">
    <source>
        <dbReference type="HAMAP-Rule" id="MF_00197"/>
    </source>
</evidence>
<organism>
    <name type="scientific">Yersinia pseudotuberculosis serotype O:1b (strain IP 31758)</name>
    <dbReference type="NCBI Taxonomy" id="349747"/>
    <lineage>
        <taxon>Bacteria</taxon>
        <taxon>Pseudomonadati</taxon>
        <taxon>Pseudomonadota</taxon>
        <taxon>Gammaproteobacteria</taxon>
        <taxon>Enterobacterales</taxon>
        <taxon>Yersiniaceae</taxon>
        <taxon>Yersinia</taxon>
    </lineage>
</organism>
<reference key="1">
    <citation type="journal article" date="2007" name="PLoS Genet.">
        <title>The complete genome sequence of Yersinia pseudotuberculosis IP31758, the causative agent of Far East scarlet-like fever.</title>
        <authorList>
            <person name="Eppinger M."/>
            <person name="Rosovitz M.J."/>
            <person name="Fricke W.F."/>
            <person name="Rasko D.A."/>
            <person name="Kokorina G."/>
            <person name="Fayolle C."/>
            <person name="Lindler L.E."/>
            <person name="Carniel E."/>
            <person name="Ravel J."/>
        </authorList>
    </citation>
    <scope>NUCLEOTIDE SEQUENCE [LARGE SCALE GENOMIC DNA]</scope>
    <source>
        <strain>IP 31758</strain>
    </source>
</reference>
<feature type="chain" id="PRO_1000058547" description="Diaminopimelate epimerase">
    <location>
        <begin position="1"/>
        <end position="274"/>
    </location>
</feature>
<feature type="active site" description="Proton donor" evidence="1">
    <location>
        <position position="73"/>
    </location>
</feature>
<feature type="active site" description="Proton acceptor" evidence="1">
    <location>
        <position position="217"/>
    </location>
</feature>
<feature type="binding site" evidence="1">
    <location>
        <position position="11"/>
    </location>
    <ligand>
        <name>substrate</name>
    </ligand>
</feature>
<feature type="binding site" evidence="1">
    <location>
        <position position="44"/>
    </location>
    <ligand>
        <name>substrate</name>
    </ligand>
</feature>
<feature type="binding site" evidence="1">
    <location>
        <position position="64"/>
    </location>
    <ligand>
        <name>substrate</name>
    </ligand>
</feature>
<feature type="binding site" evidence="1">
    <location>
        <begin position="74"/>
        <end position="75"/>
    </location>
    <ligand>
        <name>substrate</name>
    </ligand>
</feature>
<feature type="binding site" evidence="1">
    <location>
        <position position="157"/>
    </location>
    <ligand>
        <name>substrate</name>
    </ligand>
</feature>
<feature type="binding site" evidence="1">
    <location>
        <position position="190"/>
    </location>
    <ligand>
        <name>substrate</name>
    </ligand>
</feature>
<feature type="binding site" evidence="1">
    <location>
        <begin position="208"/>
        <end position="209"/>
    </location>
    <ligand>
        <name>substrate</name>
    </ligand>
</feature>
<feature type="binding site" evidence="1">
    <location>
        <begin position="218"/>
        <end position="219"/>
    </location>
    <ligand>
        <name>substrate</name>
    </ligand>
</feature>
<feature type="site" description="Could be important to modulate the pK values of the two catalytic cysteine residues" evidence="1">
    <location>
        <position position="159"/>
    </location>
</feature>
<feature type="site" description="Could be important to modulate the pK values of the two catalytic cysteine residues" evidence="1">
    <location>
        <position position="208"/>
    </location>
</feature>
<feature type="site" description="Important for dimerization" evidence="1">
    <location>
        <position position="268"/>
    </location>
</feature>
<comment type="function">
    <text evidence="1">Catalyzes the stereoinversion of LL-2,6-diaminopimelate (L,L-DAP) to meso-diaminopimelate (meso-DAP), a precursor of L-lysine and an essential component of the bacterial peptidoglycan.</text>
</comment>
<comment type="catalytic activity">
    <reaction evidence="1">
        <text>(2S,6S)-2,6-diaminopimelate = meso-2,6-diaminopimelate</text>
        <dbReference type="Rhea" id="RHEA:15393"/>
        <dbReference type="ChEBI" id="CHEBI:57609"/>
        <dbReference type="ChEBI" id="CHEBI:57791"/>
        <dbReference type="EC" id="5.1.1.7"/>
    </reaction>
</comment>
<comment type="pathway">
    <text evidence="1">Amino-acid biosynthesis; L-lysine biosynthesis via DAP pathway; DL-2,6-diaminopimelate from LL-2,6-diaminopimelate: step 1/1.</text>
</comment>
<comment type="subunit">
    <text evidence="1">Homodimer.</text>
</comment>
<comment type="subcellular location">
    <subcellularLocation>
        <location evidence="1">Cytoplasm</location>
    </subcellularLocation>
</comment>
<comment type="similarity">
    <text evidence="1">Belongs to the diaminopimelate epimerase family.</text>
</comment>
<keyword id="KW-0028">Amino-acid biosynthesis</keyword>
<keyword id="KW-0963">Cytoplasm</keyword>
<keyword id="KW-0413">Isomerase</keyword>
<keyword id="KW-0457">Lysine biosynthesis</keyword>
<gene>
    <name evidence="1" type="primary">dapF</name>
    <name type="ordered locus">YpsIP31758_0205</name>
</gene>